<name>EFHB_BOVIN</name>
<accession>F1MMV1</accession>
<proteinExistence type="evidence at protein level"/>
<sequence>MCSFLRVPSPKGLEPSKGLGAPLQPGTAYPSEMSALGPGMTVSGRKSPLSMEVGLAPEGKDDLEERRVFMGTTSPTELGLRVGLRKDFPCSKTYEERMASPEIRSPSSKGLELRLKRQNISRTVMDGSNLGVHRVSASQETKPPLSALPGRVGLEKERFLAGYCPGRVTQPPLGQGCESPQASGGRRCPVTGDPEGFGASVSKLPALGMECRGELGGESACVVMKPRAETEPPVEVDMGLTRLEEPAEMESPEPQMGLVMEPPAWQLAQQPEEQREAENTEPGVEPPDRIRPIYSGKFFDRMPCWPSAGKVLPIGYRAATCLTERFPRLMTPPEAKKFFNFRYPPAGAERVFYGRANDPQIAPSLTHGIRSKISIPAKVLINPQPITTFQQKMKDKKESVYFSNQRAPLGKSHDQTPGLPKGLDILNTTFGTAIVRETSARDMVNPPKPYKEVFEEAQAGHDLYVVSHNDYFVGEAKNRKYDPSSFHRFNLYGIPTPHFNDGRNMAKTLHWLHELQMKRGAKIVSKRVDDFKEKFQHRLGRVLDPIAETMNVPPDYTFGAFLRPEDYGVGDLIHRRLPGEYLRGKDRQRGLVAAVRHHLKKVNYQNFDTLLAAFRHYDKKGDGVIDRAELQEACDQACLHLDEKLLDQLFEYCDVDKDGLINYLEFANFLTWKDKTPLKEYEERVLIKGRKADCANPAEANVEESEPALLLKPEDIVLKEPGSSEKTLRTLLRPSDKVSNHYKTTSSEISAVVGAVPSTCYPTYGVPTIRSDIPAPLIRRVSDRTSYGEEGNAYSLLHPTIFAQKGVFERDFFKTRSKQEISEILCNIGVKLSEDEFENVWNLASKKHHRGEVCVENIRSVLDELQHADGAKCKAAT</sequence>
<comment type="function">
    <text evidence="1 4 5">Microtubule inner protein (MIP) part of the dynein-decorated doublet microtubules (DMTs) in cilia axoneme, which is required for motile cilia beating (PubMed:34715025, PubMed:37327785). Cytosolic sensor for calcium, modulates the interaction of STIM1 and ORAI1 upon store depletion and the activation of store-operated Ca(2+) entry (SOCE) and NFAT translocation from cytosol to nucleus (By similarity).</text>
</comment>
<comment type="subunit">
    <text evidence="1 5">Microtubule inner protein component of sperm flagellar doublet microtubules (PubMed:37327785). Interacts with STIM1 and ORAI1; the interactions take place upon Ca(2+)-store depletion and dissociate through a Ca(2+)-dependent mechanism. Interaction with STIM1 inhibits STIM1 interaction with SARAF (By similarity).</text>
</comment>
<comment type="subcellular location">
    <subcellularLocation>
        <location evidence="4">Cytoplasm</location>
        <location evidence="4">Cytoskeleton</location>
        <location evidence="4">Cilium axoneme</location>
    </subcellularLocation>
    <subcellularLocation>
        <location evidence="5">Cytoplasm</location>
        <location evidence="5">Cytoskeleton</location>
        <location evidence="5">Flagellum axoneme</location>
    </subcellularLocation>
    <subcellularLocation>
        <location evidence="1">Cytoplasm</location>
    </subcellularLocation>
</comment>
<comment type="tissue specificity">
    <text evidence="4">Expressed in trachea multiciliated cells.</text>
</comment>
<reference key="1">
    <citation type="journal article" date="2009" name="Genome Biol.">
        <title>A whole-genome assembly of the domestic cow, Bos taurus.</title>
        <authorList>
            <person name="Zimin A.V."/>
            <person name="Delcher A.L."/>
            <person name="Florea L."/>
            <person name="Kelley D.R."/>
            <person name="Schatz M.C."/>
            <person name="Puiu D."/>
            <person name="Hanrahan F."/>
            <person name="Pertea G."/>
            <person name="Van Tassell C.P."/>
            <person name="Sonstegard T.S."/>
            <person name="Marcais G."/>
            <person name="Roberts M."/>
            <person name="Subramanian P."/>
            <person name="Yorke J.A."/>
            <person name="Salzberg S.L."/>
        </authorList>
    </citation>
    <scope>NUCLEOTIDE SEQUENCE [LARGE SCALE GENOMIC DNA]</scope>
    <source>
        <strain>Hereford</strain>
    </source>
</reference>
<reference evidence="9" key="2">
    <citation type="journal article" date="2021" name="Cell">
        <title>De novo identification of mammalian ciliary motility proteins using cryo-EM.</title>
        <authorList>
            <person name="Gui M."/>
            <person name="Farley H."/>
            <person name="Anujan P."/>
            <person name="Anderson J.R."/>
            <person name="Maxwell D.W."/>
            <person name="Whitchurch J.B."/>
            <person name="Botsch J.J."/>
            <person name="Qiu T."/>
            <person name="Meleppattu S."/>
            <person name="Singh S.K."/>
            <person name="Zhang Q."/>
            <person name="Thompson J."/>
            <person name="Lucas J.S."/>
            <person name="Bingle C.D."/>
            <person name="Norris D.P."/>
            <person name="Roy S."/>
            <person name="Brown A."/>
        </authorList>
    </citation>
    <scope>STRUCTURE BY ELECTRON MICROSCOPY (3.40 ANGSTROMS)</scope>
    <scope>FUNCTION</scope>
    <scope>SUBCELLULAR LOCATION</scope>
    <scope>TISSUE SPECIFICITY</scope>
</reference>
<reference evidence="10" key="3">
    <citation type="journal article" date="2023" name="Cell">
        <title>Structural specializations of the sperm tail.</title>
        <authorList>
            <person name="Leung M.R."/>
            <person name="Zeng J."/>
            <person name="Wang X."/>
            <person name="Roelofs M.C."/>
            <person name="Huang W."/>
            <person name="Zenezini Chiozzi R."/>
            <person name="Hevler J.F."/>
            <person name="Heck A.J.R."/>
            <person name="Dutcher S.K."/>
            <person name="Brown A."/>
            <person name="Zhang R."/>
            <person name="Zeev-Ben-Mordehai T."/>
        </authorList>
    </citation>
    <scope>STRUCTURE BY ELECTRON MICROSCOPY (3.60 ANGSTROMS)</scope>
    <scope>FUNCTION</scope>
    <scope>SUBUNIT</scope>
    <scope>SUBCELLULAR LOCATION</scope>
</reference>
<gene>
    <name evidence="8" type="primary">EFHB</name>
    <name evidence="6" type="synonym">CFAP21</name>
</gene>
<keyword id="KW-0002">3D-structure</keyword>
<keyword id="KW-0106">Calcium</keyword>
<keyword id="KW-0109">Calcium transport</keyword>
<keyword id="KW-0966">Cell projection</keyword>
<keyword id="KW-0969">Cilium</keyword>
<keyword id="KW-0963">Cytoplasm</keyword>
<keyword id="KW-0206">Cytoskeleton</keyword>
<keyword id="KW-0282">Flagellum</keyword>
<keyword id="KW-0406">Ion transport</keyword>
<keyword id="KW-0479">Metal-binding</keyword>
<keyword id="KW-1185">Reference proteome</keyword>
<keyword id="KW-0677">Repeat</keyword>
<keyword id="KW-0813">Transport</keyword>
<evidence type="ECO:0000250" key="1">
    <source>
        <dbReference type="UniProtKB" id="Q8N7U6"/>
    </source>
</evidence>
<evidence type="ECO:0000255" key="2">
    <source>
        <dbReference type="PROSITE-ProRule" id="PRU00448"/>
    </source>
</evidence>
<evidence type="ECO:0000256" key="3">
    <source>
        <dbReference type="SAM" id="MobiDB-lite"/>
    </source>
</evidence>
<evidence type="ECO:0000269" key="4">
    <source>
    </source>
</evidence>
<evidence type="ECO:0000269" key="5">
    <source>
    </source>
</evidence>
<evidence type="ECO:0000303" key="6">
    <source>
    </source>
</evidence>
<evidence type="ECO:0000312" key="7">
    <source>
        <dbReference type="Proteomes" id="UP000009136"/>
    </source>
</evidence>
<evidence type="ECO:0000312" key="8">
    <source>
        <dbReference type="VGNC" id="VGNC:28350"/>
    </source>
</evidence>
<evidence type="ECO:0007744" key="9">
    <source>
        <dbReference type="PDB" id="7RRO"/>
    </source>
</evidence>
<evidence type="ECO:0007744" key="10">
    <source>
        <dbReference type="PDB" id="8OTZ"/>
    </source>
</evidence>
<dbReference type="RefSeq" id="NP_001193537.2">
    <property type="nucleotide sequence ID" value="NM_001206608.2"/>
</dbReference>
<dbReference type="PDB" id="7RRO">
    <property type="method" value="EM"/>
    <property type="resolution" value="3.40 A"/>
    <property type="chains" value="1/2=1-877"/>
</dbReference>
<dbReference type="PDB" id="8OTZ">
    <property type="method" value="EM"/>
    <property type="resolution" value="3.60 A"/>
    <property type="chains" value="E/F=1-877"/>
</dbReference>
<dbReference type="PDB" id="9CPB">
    <property type="method" value="EM"/>
    <property type="resolution" value="3.52 A"/>
    <property type="chains" value="2D/2E=1-877"/>
</dbReference>
<dbReference type="PDBsum" id="7RRO"/>
<dbReference type="PDBsum" id="8OTZ"/>
<dbReference type="PDBsum" id="9CPB"/>
<dbReference type="EMDB" id="EMD-17187"/>
<dbReference type="EMDB" id="EMD-24664"/>
<dbReference type="EMDB" id="EMD-45801"/>
<dbReference type="EMDB" id="EMD-50664"/>
<dbReference type="SMR" id="F1MMV1"/>
<dbReference type="FunCoup" id="F1MMV1">
    <property type="interactions" value="59"/>
</dbReference>
<dbReference type="STRING" id="9913.ENSBTAP00000053164"/>
<dbReference type="PaxDb" id="9913-ENSBTAP00000053164"/>
<dbReference type="Ensembl" id="ENSBTAT00000061194.4">
    <property type="protein sequence ID" value="ENSBTAP00000053164.3"/>
    <property type="gene ID" value="ENSBTAG00000013806.8"/>
</dbReference>
<dbReference type="GeneID" id="530549"/>
<dbReference type="VEuPathDB" id="HostDB:ENSBTAG00000013806"/>
<dbReference type="VGNC" id="VGNC:28350">
    <property type="gene designation" value="EFHB"/>
</dbReference>
<dbReference type="eggNOG" id="ENOG502QV2M">
    <property type="taxonomic scope" value="Eukaryota"/>
</dbReference>
<dbReference type="GeneTree" id="ENSGT00530000063528"/>
<dbReference type="HOGENOM" id="CLU_017580_0_0_1"/>
<dbReference type="InParanoid" id="F1MMV1"/>
<dbReference type="OMA" id="DCIRPIY"/>
<dbReference type="TreeFam" id="TF323832"/>
<dbReference type="Proteomes" id="UP000009136">
    <property type="component" value="Chromosome 1"/>
</dbReference>
<dbReference type="Bgee" id="ENSBTAG00000013806">
    <property type="expression patterns" value="Expressed in spermatid and 108 other cell types or tissues"/>
</dbReference>
<dbReference type="GO" id="GO:0160111">
    <property type="term" value="C:axonemal A tubule inner sheath"/>
    <property type="evidence" value="ECO:0000250"/>
    <property type="project" value="UniProtKB"/>
</dbReference>
<dbReference type="GO" id="GO:0005879">
    <property type="term" value="C:axonemal microtubule"/>
    <property type="evidence" value="ECO:0000314"/>
    <property type="project" value="UniProtKB"/>
</dbReference>
<dbReference type="GO" id="GO:0036126">
    <property type="term" value="C:sperm flagellum"/>
    <property type="evidence" value="ECO:0000250"/>
    <property type="project" value="UniProtKB"/>
</dbReference>
<dbReference type="GO" id="GO:0005509">
    <property type="term" value="F:calcium ion binding"/>
    <property type="evidence" value="ECO:0007669"/>
    <property type="project" value="InterPro"/>
</dbReference>
<dbReference type="GO" id="GO:0061891">
    <property type="term" value="F:calcium ion sensor activity"/>
    <property type="evidence" value="ECO:0007669"/>
    <property type="project" value="Ensembl"/>
</dbReference>
<dbReference type="GO" id="GO:0006816">
    <property type="term" value="P:calcium ion transport"/>
    <property type="evidence" value="ECO:0007669"/>
    <property type="project" value="UniProtKB-KW"/>
</dbReference>
<dbReference type="GO" id="GO:0030317">
    <property type="term" value="P:flagellated sperm motility"/>
    <property type="evidence" value="ECO:0000250"/>
    <property type="project" value="UniProtKB"/>
</dbReference>
<dbReference type="GO" id="GO:0070884">
    <property type="term" value="P:regulation of calcineurin-NFAT signaling cascade"/>
    <property type="evidence" value="ECO:0007669"/>
    <property type="project" value="Ensembl"/>
</dbReference>
<dbReference type="GO" id="GO:2001256">
    <property type="term" value="P:regulation of store-operated calcium entry"/>
    <property type="evidence" value="ECO:0007669"/>
    <property type="project" value="Ensembl"/>
</dbReference>
<dbReference type="CDD" id="cd00051">
    <property type="entry name" value="EFh"/>
    <property type="match status" value="1"/>
</dbReference>
<dbReference type="Gene3D" id="1.10.238.10">
    <property type="entry name" value="EF-hand"/>
    <property type="match status" value="1"/>
</dbReference>
<dbReference type="InterPro" id="IPR011992">
    <property type="entry name" value="EF-hand-dom_pair"/>
</dbReference>
<dbReference type="InterPro" id="IPR018247">
    <property type="entry name" value="EF_Hand_1_Ca_BS"/>
</dbReference>
<dbReference type="InterPro" id="IPR002048">
    <property type="entry name" value="EF_hand_dom"/>
</dbReference>
<dbReference type="InterPro" id="IPR040193">
    <property type="entry name" value="EFHC1/EFHC2/EFHB"/>
</dbReference>
<dbReference type="PANTHER" id="PTHR12086">
    <property type="entry name" value="EF-HAND DOMAIN C-TERMINAL CONTAINING PROTEIN"/>
    <property type="match status" value="1"/>
</dbReference>
<dbReference type="PANTHER" id="PTHR12086:SF12">
    <property type="entry name" value="EF-HAND DOMAIN-CONTAINING FAMILY MEMBER B"/>
    <property type="match status" value="1"/>
</dbReference>
<dbReference type="Pfam" id="PF13499">
    <property type="entry name" value="EF-hand_7"/>
    <property type="match status" value="1"/>
</dbReference>
<dbReference type="Pfam" id="PF25325">
    <property type="entry name" value="EF-hand_EFHB_C"/>
    <property type="match status" value="1"/>
</dbReference>
<dbReference type="SMART" id="SM00054">
    <property type="entry name" value="EFh"/>
    <property type="match status" value="2"/>
</dbReference>
<dbReference type="SUPFAM" id="SSF47473">
    <property type="entry name" value="EF-hand"/>
    <property type="match status" value="1"/>
</dbReference>
<dbReference type="PROSITE" id="PS00018">
    <property type="entry name" value="EF_HAND_1"/>
    <property type="match status" value="1"/>
</dbReference>
<dbReference type="PROSITE" id="PS50222">
    <property type="entry name" value="EF_HAND_2"/>
    <property type="match status" value="2"/>
</dbReference>
<protein>
    <recommendedName>
        <fullName>EF-hand domain-containing family member B</fullName>
    </recommendedName>
    <alternativeName>
        <fullName evidence="6">Cilia- and flagella-associated protein 21</fullName>
    </alternativeName>
</protein>
<feature type="chain" id="PRO_0000456159" description="EF-hand domain-containing family member B">
    <location>
        <begin position="1"/>
        <end position="877"/>
    </location>
</feature>
<feature type="domain" description="EF-hand 1" evidence="2">
    <location>
        <begin position="605"/>
        <end position="640"/>
    </location>
</feature>
<feature type="domain" description="EF-hand 2" evidence="2">
    <location>
        <begin position="641"/>
        <end position="676"/>
    </location>
</feature>
<feature type="region of interest" description="Disordered" evidence="3">
    <location>
        <begin position="1"/>
        <end position="47"/>
    </location>
</feature>
<feature type="region of interest" description="Disordered" evidence="3">
    <location>
        <begin position="268"/>
        <end position="290"/>
    </location>
</feature>
<feature type="binding site" evidence="1">
    <location>
        <position position="618"/>
    </location>
    <ligand>
        <name>Ca(2+)</name>
        <dbReference type="ChEBI" id="CHEBI:29108"/>
        <label>1</label>
    </ligand>
</feature>
<feature type="binding site" evidence="1">
    <location>
        <position position="622"/>
    </location>
    <ligand>
        <name>Ca(2+)</name>
        <dbReference type="ChEBI" id="CHEBI:29108"/>
        <label>1</label>
    </ligand>
</feature>
<feature type="binding site" evidence="1">
    <location>
        <position position="629"/>
    </location>
    <ligand>
        <name>Ca(2+)</name>
        <dbReference type="ChEBI" id="CHEBI:29108"/>
        <label>1</label>
    </ligand>
</feature>
<feature type="binding site" evidence="2">
    <location>
        <position position="654"/>
    </location>
    <ligand>
        <name>Ca(2+)</name>
        <dbReference type="ChEBI" id="CHEBI:29108"/>
        <label>2</label>
    </ligand>
</feature>
<feature type="binding site" evidence="2">
    <location>
        <position position="656"/>
    </location>
    <ligand>
        <name>Ca(2+)</name>
        <dbReference type="ChEBI" id="CHEBI:29108"/>
        <label>2</label>
    </ligand>
</feature>
<feature type="binding site" evidence="2">
    <location>
        <position position="658"/>
    </location>
    <ligand>
        <name>Ca(2+)</name>
        <dbReference type="ChEBI" id="CHEBI:29108"/>
        <label>2</label>
    </ligand>
</feature>
<feature type="binding site" evidence="2">
    <location>
        <position position="665"/>
    </location>
    <ligand>
        <name>Ca(2+)</name>
        <dbReference type="ChEBI" id="CHEBI:29108"/>
        <label>2</label>
    </ligand>
</feature>
<organism evidence="7">
    <name type="scientific">Bos taurus</name>
    <name type="common">Bovine</name>
    <dbReference type="NCBI Taxonomy" id="9913"/>
    <lineage>
        <taxon>Eukaryota</taxon>
        <taxon>Metazoa</taxon>
        <taxon>Chordata</taxon>
        <taxon>Craniata</taxon>
        <taxon>Vertebrata</taxon>
        <taxon>Euteleostomi</taxon>
        <taxon>Mammalia</taxon>
        <taxon>Eutheria</taxon>
        <taxon>Laurasiatheria</taxon>
        <taxon>Artiodactyla</taxon>
        <taxon>Ruminantia</taxon>
        <taxon>Pecora</taxon>
        <taxon>Bovidae</taxon>
        <taxon>Bovinae</taxon>
        <taxon>Bos</taxon>
    </lineage>
</organism>